<reference key="1">
    <citation type="journal article" date="2006" name="Proc. Natl. Acad. Sci. U.S.A.">
        <title>Burkholderia xenovorans LB400 harbors a multi-replicon, 9.73-Mbp genome shaped for versatility.</title>
        <authorList>
            <person name="Chain P.S.G."/>
            <person name="Denef V.J."/>
            <person name="Konstantinidis K.T."/>
            <person name="Vergez L.M."/>
            <person name="Agullo L."/>
            <person name="Reyes V.L."/>
            <person name="Hauser L."/>
            <person name="Cordova M."/>
            <person name="Gomez L."/>
            <person name="Gonzalez M."/>
            <person name="Land M."/>
            <person name="Lao V."/>
            <person name="Larimer F."/>
            <person name="LiPuma J.J."/>
            <person name="Mahenthiralingam E."/>
            <person name="Malfatti S.A."/>
            <person name="Marx C.J."/>
            <person name="Parnell J.J."/>
            <person name="Ramette A."/>
            <person name="Richardson P."/>
            <person name="Seeger M."/>
            <person name="Smith D."/>
            <person name="Spilker T."/>
            <person name="Sul W.J."/>
            <person name="Tsoi T.V."/>
            <person name="Ulrich L.E."/>
            <person name="Zhulin I.B."/>
            <person name="Tiedje J.M."/>
        </authorList>
    </citation>
    <scope>NUCLEOTIDE SEQUENCE [LARGE SCALE GENOMIC DNA]</scope>
    <source>
        <strain>LB400</strain>
    </source>
</reference>
<proteinExistence type="inferred from homology"/>
<protein>
    <recommendedName>
        <fullName evidence="1">1-deoxy-D-xylulose-5-phosphate synthase</fullName>
        <ecNumber evidence="1">2.2.1.7</ecNumber>
    </recommendedName>
    <alternativeName>
        <fullName evidence="1">1-deoxyxylulose-5-phosphate synthase</fullName>
        <shortName evidence="1">DXP synthase</shortName>
        <shortName evidence="1">DXPS</shortName>
    </alternativeName>
</protein>
<comment type="function">
    <text evidence="1">Catalyzes the acyloin condensation reaction between C atoms 2 and 3 of pyruvate and glyceraldehyde 3-phosphate to yield 1-deoxy-D-xylulose-5-phosphate (DXP).</text>
</comment>
<comment type="catalytic activity">
    <reaction evidence="1">
        <text>D-glyceraldehyde 3-phosphate + pyruvate + H(+) = 1-deoxy-D-xylulose 5-phosphate + CO2</text>
        <dbReference type="Rhea" id="RHEA:12605"/>
        <dbReference type="ChEBI" id="CHEBI:15361"/>
        <dbReference type="ChEBI" id="CHEBI:15378"/>
        <dbReference type="ChEBI" id="CHEBI:16526"/>
        <dbReference type="ChEBI" id="CHEBI:57792"/>
        <dbReference type="ChEBI" id="CHEBI:59776"/>
        <dbReference type="EC" id="2.2.1.7"/>
    </reaction>
</comment>
<comment type="cofactor">
    <cofactor evidence="1">
        <name>Mg(2+)</name>
        <dbReference type="ChEBI" id="CHEBI:18420"/>
    </cofactor>
    <text evidence="1">Binds 1 Mg(2+) ion per subunit.</text>
</comment>
<comment type="cofactor">
    <cofactor evidence="1">
        <name>thiamine diphosphate</name>
        <dbReference type="ChEBI" id="CHEBI:58937"/>
    </cofactor>
    <text evidence="1">Binds 1 thiamine pyrophosphate per subunit.</text>
</comment>
<comment type="pathway">
    <text evidence="1">Metabolic intermediate biosynthesis; 1-deoxy-D-xylulose 5-phosphate biosynthesis; 1-deoxy-D-xylulose 5-phosphate from D-glyceraldehyde 3-phosphate and pyruvate: step 1/1.</text>
</comment>
<comment type="subunit">
    <text evidence="1">Homodimer.</text>
</comment>
<comment type="similarity">
    <text evidence="1">Belongs to the transketolase family. DXPS subfamily.</text>
</comment>
<evidence type="ECO:0000255" key="1">
    <source>
        <dbReference type="HAMAP-Rule" id="MF_00315"/>
    </source>
</evidence>
<dbReference type="EC" id="2.2.1.7" evidence="1"/>
<dbReference type="EMBL" id="CP000271">
    <property type="protein sequence ID" value="ABE33168.1"/>
    <property type="molecule type" value="Genomic_DNA"/>
</dbReference>
<dbReference type="RefSeq" id="WP_011490544.1">
    <property type="nucleotide sequence ID" value="NC_007952.1"/>
</dbReference>
<dbReference type="SMR" id="Q13RX1"/>
<dbReference type="STRING" id="266265.Bxe_B2827"/>
<dbReference type="KEGG" id="bxb:DR64_5156"/>
<dbReference type="KEGG" id="bxe:Bxe_B2827"/>
<dbReference type="PATRIC" id="fig|266265.5.peg.4866"/>
<dbReference type="eggNOG" id="COG1154">
    <property type="taxonomic scope" value="Bacteria"/>
</dbReference>
<dbReference type="OrthoDB" id="9803371at2"/>
<dbReference type="UniPathway" id="UPA00064">
    <property type="reaction ID" value="UER00091"/>
</dbReference>
<dbReference type="Proteomes" id="UP000001817">
    <property type="component" value="Chromosome 2"/>
</dbReference>
<dbReference type="GO" id="GO:0005829">
    <property type="term" value="C:cytosol"/>
    <property type="evidence" value="ECO:0007669"/>
    <property type="project" value="TreeGrafter"/>
</dbReference>
<dbReference type="GO" id="GO:0008661">
    <property type="term" value="F:1-deoxy-D-xylulose-5-phosphate synthase activity"/>
    <property type="evidence" value="ECO:0007669"/>
    <property type="project" value="UniProtKB-UniRule"/>
</dbReference>
<dbReference type="GO" id="GO:0000287">
    <property type="term" value="F:magnesium ion binding"/>
    <property type="evidence" value="ECO:0007669"/>
    <property type="project" value="UniProtKB-UniRule"/>
</dbReference>
<dbReference type="GO" id="GO:0030976">
    <property type="term" value="F:thiamine pyrophosphate binding"/>
    <property type="evidence" value="ECO:0007669"/>
    <property type="project" value="UniProtKB-UniRule"/>
</dbReference>
<dbReference type="GO" id="GO:0052865">
    <property type="term" value="P:1-deoxy-D-xylulose 5-phosphate biosynthetic process"/>
    <property type="evidence" value="ECO:0007669"/>
    <property type="project" value="UniProtKB-UniPathway"/>
</dbReference>
<dbReference type="GO" id="GO:0019288">
    <property type="term" value="P:isopentenyl diphosphate biosynthetic process, methylerythritol 4-phosphate pathway"/>
    <property type="evidence" value="ECO:0007669"/>
    <property type="project" value="TreeGrafter"/>
</dbReference>
<dbReference type="GO" id="GO:0016114">
    <property type="term" value="P:terpenoid biosynthetic process"/>
    <property type="evidence" value="ECO:0007669"/>
    <property type="project" value="UniProtKB-UniRule"/>
</dbReference>
<dbReference type="GO" id="GO:0009228">
    <property type="term" value="P:thiamine biosynthetic process"/>
    <property type="evidence" value="ECO:0007669"/>
    <property type="project" value="UniProtKB-UniRule"/>
</dbReference>
<dbReference type="CDD" id="cd02007">
    <property type="entry name" value="TPP_DXS"/>
    <property type="match status" value="1"/>
</dbReference>
<dbReference type="CDD" id="cd07033">
    <property type="entry name" value="TPP_PYR_DXS_TK_like"/>
    <property type="match status" value="1"/>
</dbReference>
<dbReference type="FunFam" id="3.40.50.920:FF:000002">
    <property type="entry name" value="1-deoxy-D-xylulose-5-phosphate synthase"/>
    <property type="match status" value="1"/>
</dbReference>
<dbReference type="FunFam" id="3.40.50.970:FF:000005">
    <property type="entry name" value="1-deoxy-D-xylulose-5-phosphate synthase"/>
    <property type="match status" value="1"/>
</dbReference>
<dbReference type="Gene3D" id="3.40.50.920">
    <property type="match status" value="1"/>
</dbReference>
<dbReference type="Gene3D" id="3.40.50.970">
    <property type="match status" value="2"/>
</dbReference>
<dbReference type="HAMAP" id="MF_00315">
    <property type="entry name" value="DXP_synth"/>
    <property type="match status" value="1"/>
</dbReference>
<dbReference type="InterPro" id="IPR005477">
    <property type="entry name" value="Dxylulose-5-P_synthase"/>
</dbReference>
<dbReference type="InterPro" id="IPR029061">
    <property type="entry name" value="THDP-binding"/>
</dbReference>
<dbReference type="InterPro" id="IPR009014">
    <property type="entry name" value="Transketo_C/PFOR_II"/>
</dbReference>
<dbReference type="InterPro" id="IPR005475">
    <property type="entry name" value="Transketolase-like_Pyr-bd"/>
</dbReference>
<dbReference type="InterPro" id="IPR020826">
    <property type="entry name" value="Transketolase_BS"/>
</dbReference>
<dbReference type="InterPro" id="IPR033248">
    <property type="entry name" value="Transketolase_C"/>
</dbReference>
<dbReference type="InterPro" id="IPR049557">
    <property type="entry name" value="Transketolase_CS"/>
</dbReference>
<dbReference type="NCBIfam" id="TIGR00204">
    <property type="entry name" value="dxs"/>
    <property type="match status" value="1"/>
</dbReference>
<dbReference type="NCBIfam" id="NF003933">
    <property type="entry name" value="PRK05444.2-2"/>
    <property type="match status" value="1"/>
</dbReference>
<dbReference type="PANTHER" id="PTHR43322">
    <property type="entry name" value="1-D-DEOXYXYLULOSE 5-PHOSPHATE SYNTHASE-RELATED"/>
    <property type="match status" value="1"/>
</dbReference>
<dbReference type="PANTHER" id="PTHR43322:SF5">
    <property type="entry name" value="1-DEOXY-D-XYLULOSE-5-PHOSPHATE SYNTHASE, CHLOROPLASTIC"/>
    <property type="match status" value="1"/>
</dbReference>
<dbReference type="Pfam" id="PF13292">
    <property type="entry name" value="DXP_synthase_N"/>
    <property type="match status" value="1"/>
</dbReference>
<dbReference type="Pfam" id="PF02779">
    <property type="entry name" value="Transket_pyr"/>
    <property type="match status" value="1"/>
</dbReference>
<dbReference type="Pfam" id="PF02780">
    <property type="entry name" value="Transketolase_C"/>
    <property type="match status" value="1"/>
</dbReference>
<dbReference type="SMART" id="SM00861">
    <property type="entry name" value="Transket_pyr"/>
    <property type="match status" value="1"/>
</dbReference>
<dbReference type="SUPFAM" id="SSF52518">
    <property type="entry name" value="Thiamin diphosphate-binding fold (THDP-binding)"/>
    <property type="match status" value="2"/>
</dbReference>
<dbReference type="SUPFAM" id="SSF52922">
    <property type="entry name" value="TK C-terminal domain-like"/>
    <property type="match status" value="1"/>
</dbReference>
<dbReference type="PROSITE" id="PS00801">
    <property type="entry name" value="TRANSKETOLASE_1"/>
    <property type="match status" value="1"/>
</dbReference>
<dbReference type="PROSITE" id="PS00802">
    <property type="entry name" value="TRANSKETOLASE_2"/>
    <property type="match status" value="1"/>
</dbReference>
<keyword id="KW-0414">Isoprene biosynthesis</keyword>
<keyword id="KW-0460">Magnesium</keyword>
<keyword id="KW-0479">Metal-binding</keyword>
<keyword id="KW-1185">Reference proteome</keyword>
<keyword id="KW-0784">Thiamine biosynthesis</keyword>
<keyword id="KW-0786">Thiamine pyrophosphate</keyword>
<keyword id="KW-0808">Transferase</keyword>
<accession>Q13RX1</accession>
<sequence length="635" mass="68228">MYDLLKTIDDPAALRRLDRRQLQPLADELRAFVLDSVSQTGGHLSSNLGTVELTIALHYVFDTPHDRIVWDVGHQTYPHKILTGRRDQMHTLRQLGGISGFPKRDESEYDTFGTAHSSTSISAALGMAVASKLKGDNRMGIAVIGDGAMTAGMAFEAMNNAGVEDDVPLLVILNDNDMSISPPVGALNRHLARLMSGRFYAAARAGVERVLRVAPPMLDLARKLEEHAKGMIVPATLFEEFGFNYIGPIDGHDLDSLIPTLQNIKELRGPQFLHVVTKKGQGYKLAEADPVLYHGPGKFNPAEGIKPAATPSKKTYTQVFGEWLCDAAELDARVIGITPAMREGSGMVEFEKRFPDRYFDVGIAEQHAVTFAGGLAAEGMKPVVAIYSTFLQRAYDQLIHDVALQNLPVVFAIDRAGLVGADGATHAGAYDLAFLRCIPNMTVMAASDENECRQMLYTALQQPNPTAVRYPRGAGTGVATIKQMTALPLGKGEIRRETSQPAGKRIAILAFGTMVAPSLAAAEQLDATVANMRFVKPLDADLVRQLAETHDAIVTVEEGCVMGGAGSACVEALLASGVTRPVLQLGLPDRFIDHGDPAKLLAACGLDAVGITKSIRERFLLSGAVGGQSSVKRVA</sequence>
<feature type="chain" id="PRO_0000256393" description="1-deoxy-D-xylulose-5-phosphate synthase">
    <location>
        <begin position="1"/>
        <end position="635"/>
    </location>
</feature>
<feature type="binding site" evidence="1">
    <location>
        <position position="74"/>
    </location>
    <ligand>
        <name>thiamine diphosphate</name>
        <dbReference type="ChEBI" id="CHEBI:58937"/>
    </ligand>
</feature>
<feature type="binding site" evidence="1">
    <location>
        <begin position="115"/>
        <end position="117"/>
    </location>
    <ligand>
        <name>thiamine diphosphate</name>
        <dbReference type="ChEBI" id="CHEBI:58937"/>
    </ligand>
</feature>
<feature type="binding site" evidence="1">
    <location>
        <position position="146"/>
    </location>
    <ligand>
        <name>Mg(2+)</name>
        <dbReference type="ChEBI" id="CHEBI:18420"/>
    </ligand>
</feature>
<feature type="binding site" evidence="1">
    <location>
        <begin position="147"/>
        <end position="148"/>
    </location>
    <ligand>
        <name>thiamine diphosphate</name>
        <dbReference type="ChEBI" id="CHEBI:58937"/>
    </ligand>
</feature>
<feature type="binding site" evidence="1">
    <location>
        <position position="176"/>
    </location>
    <ligand>
        <name>Mg(2+)</name>
        <dbReference type="ChEBI" id="CHEBI:18420"/>
    </ligand>
</feature>
<feature type="binding site" evidence="1">
    <location>
        <position position="176"/>
    </location>
    <ligand>
        <name>thiamine diphosphate</name>
        <dbReference type="ChEBI" id="CHEBI:58937"/>
    </ligand>
</feature>
<feature type="binding site" evidence="1">
    <location>
        <position position="283"/>
    </location>
    <ligand>
        <name>thiamine diphosphate</name>
        <dbReference type="ChEBI" id="CHEBI:58937"/>
    </ligand>
</feature>
<feature type="binding site" evidence="1">
    <location>
        <position position="365"/>
    </location>
    <ligand>
        <name>thiamine diphosphate</name>
        <dbReference type="ChEBI" id="CHEBI:58937"/>
    </ligand>
</feature>
<gene>
    <name evidence="1" type="primary">dxs</name>
    <name type="ordered locus">Bxeno_B0200</name>
    <name type="ORF">Bxe_B2827</name>
</gene>
<name>DXS_PARXL</name>
<organism>
    <name type="scientific">Paraburkholderia xenovorans (strain LB400)</name>
    <dbReference type="NCBI Taxonomy" id="266265"/>
    <lineage>
        <taxon>Bacteria</taxon>
        <taxon>Pseudomonadati</taxon>
        <taxon>Pseudomonadota</taxon>
        <taxon>Betaproteobacteria</taxon>
        <taxon>Burkholderiales</taxon>
        <taxon>Burkholderiaceae</taxon>
        <taxon>Paraburkholderia</taxon>
    </lineage>
</organism>